<comment type="function">
    <text evidence="1 3">Sigma factors are initiation factors that promote the attachment of RNA polymerase to specific initiation sites and are then released. Extracytoplasmic function (ECF) sigma factors are usually held in an inactive form by an anti-sigma factor until released by regulated intramembrane proteolysis; this sigma factor does not seem to have a cognate anti-sigma factor however. It has been suggested that the sigma domains 2 and 4 may interact via polar residues in this protein to autoregulate. Positively regulates expression of a small regulon of genes (By similarity).</text>
</comment>
<comment type="subunit">
    <text evidence="1">Interacts transiently with the RNA polymerase catalytic core formed by RpoA, RpoB, RpoC and RpoZ (2 alpha, 1 beta, 1 beta' and 1 omega subunit) to form the RNA polymerase holoenzyme that can initiate transcription.</text>
</comment>
<comment type="induction">
    <text evidence="3">The most abundant of the sigma factor transcripts, it is expressed in exponential phase; repressed by detergent (7-fold), heat shock (9-fold, 45 degrees Celsius) and in stationary phase. Autoregulated (PubMed:15049808).</text>
</comment>
<comment type="domain">
    <text evidence="1">The sigma-70 factor domain-2 mediates sequence-specific interaction with the -10 element in promoter DNA, and plays an important role in melting the double-stranded DNA and the formation of the transcription bubble. The sigma-70 factor domain-2 mediates interaction with the RNA polymerase subunits RpoB and RpoC (By similarity).</text>
</comment>
<comment type="domain">
    <text evidence="1">The sigma-70 factor domain-4 contains a helix-turn-helix (H-T-H) motif that mediates interaction with the -35 element in promoter DNA. The domain also mediates interaction with the RNA polymerase subunit RpoA (By similarity).</text>
</comment>
<comment type="disruption phenotype">
    <text evidence="3">No effect on growth in culture, or in isolated macrophages. Essential for mouse lethality; infected DBA/2 mice survive more than 3 times longer following infection with mutant bacterium despite a similar bacterial burden. Disruption leads to repression of a number of genes including itself and several virulence-associated genes.</text>
</comment>
<comment type="biotechnology">
    <text evidence="3">The disruption mutant may be a good live attenuated vaccine candidate because of its persistent, non-lethal pattern of infection in mice.</text>
</comment>
<comment type="similarity">
    <text evidence="4">Belongs to the sigma-70 factor family. ECF subfamily.</text>
</comment>
<comment type="sequence caution" evidence="4">
    <conflict type="erroneous initiation">
        <sequence resource="EMBL-CDS" id="AAK46409"/>
    </conflict>
    <text>Extended N-terminus.</text>
</comment>
<accession>P9WGH0</accession>
<accession>L0T8P5</accession>
<accession>P66809</accession>
<accession>Q10679</accession>
<proteinExistence type="evidence at protein level"/>
<keyword id="KW-0238">DNA-binding</keyword>
<keyword id="KW-1185">Reference proteome</keyword>
<keyword id="KW-0731">Sigma factor</keyword>
<keyword id="KW-0804">Transcription</keyword>
<keyword id="KW-0805">Transcription regulation</keyword>
<reference key="1">
    <citation type="journal article" date="2002" name="J. Bacteriol.">
        <title>Whole-genome comparison of Mycobacterium tuberculosis clinical and laboratory strains.</title>
        <authorList>
            <person name="Fleischmann R.D."/>
            <person name="Alland D."/>
            <person name="Eisen J.A."/>
            <person name="Carpenter L."/>
            <person name="White O."/>
            <person name="Peterson J.D."/>
            <person name="DeBoy R.T."/>
            <person name="Dodson R.J."/>
            <person name="Gwinn M.L."/>
            <person name="Haft D.H."/>
            <person name="Hickey E.K."/>
            <person name="Kolonay J.F."/>
            <person name="Nelson W.C."/>
            <person name="Umayam L.A."/>
            <person name="Ermolaeva M.D."/>
            <person name="Salzberg S.L."/>
            <person name="Delcher A."/>
            <person name="Utterback T.R."/>
            <person name="Weidman J.F."/>
            <person name="Khouri H.M."/>
            <person name="Gill J."/>
            <person name="Mikula A."/>
            <person name="Bishai W."/>
            <person name="Jacobs W.R. Jr."/>
            <person name="Venter J.C."/>
            <person name="Fraser C.M."/>
        </authorList>
    </citation>
    <scope>NUCLEOTIDE SEQUENCE [LARGE SCALE GENOMIC DNA]</scope>
    <source>
        <strain>CDC 1551 / Oshkosh</strain>
    </source>
</reference>
<reference key="2">
    <citation type="journal article" date="2004" name="Mol. Microbiol.">
        <title>Mycobacterium tuberculosis ECF sigma factor sigC is required for lethality in mice and for the conditional expression of a defined gene set.</title>
        <authorList>
            <person name="Sun R."/>
            <person name="Converse P.J."/>
            <person name="Ko C."/>
            <person name="Tyagi S."/>
            <person name="Morrison N.E."/>
            <person name="Bishai W.R."/>
        </authorList>
    </citation>
    <scope>FUNCTION AS A SIGMA FACTOR</scope>
    <scope>INDUCTION</scope>
    <scope>BIOTECHNOLOGY</scope>
    <scope>DISRUPTION PHENOTYPE</scope>
    <source>
        <strain>CDC 1551 / Oshkosh</strain>
    </source>
</reference>
<evidence type="ECO:0000250" key="1"/>
<evidence type="ECO:0000255" key="2"/>
<evidence type="ECO:0000269" key="3">
    <source>
    </source>
</evidence>
<evidence type="ECO:0000305" key="4"/>
<gene>
    <name type="primary">sigC</name>
    <name type="ordered locus">MT2129</name>
</gene>
<feature type="chain" id="PRO_0000428363" description="ECF RNA polymerase sigma factor SigC">
    <location>
        <begin position="1"/>
        <end position="185"/>
    </location>
</feature>
<feature type="DNA-binding region" description="H-T-H motif" evidence="1">
    <location>
        <begin position="149"/>
        <end position="168"/>
    </location>
</feature>
<feature type="region of interest" description="Sigma-70 factor domain-2">
    <location>
        <begin position="30"/>
        <end position="94"/>
    </location>
</feature>
<feature type="region of interest" description="Sigma-70 factor domain-4">
    <location>
        <begin position="123"/>
        <end position="174"/>
    </location>
</feature>
<feature type="short sequence motif" description="Polymerase core binding" evidence="2">
    <location>
        <begin position="52"/>
        <end position="55"/>
    </location>
</feature>
<name>RPSC_MYCTO</name>
<organism>
    <name type="scientific">Mycobacterium tuberculosis (strain CDC 1551 / Oshkosh)</name>
    <dbReference type="NCBI Taxonomy" id="83331"/>
    <lineage>
        <taxon>Bacteria</taxon>
        <taxon>Bacillati</taxon>
        <taxon>Actinomycetota</taxon>
        <taxon>Actinomycetes</taxon>
        <taxon>Mycobacteriales</taxon>
        <taxon>Mycobacteriaceae</taxon>
        <taxon>Mycobacterium</taxon>
        <taxon>Mycobacterium tuberculosis complex</taxon>
    </lineage>
</organism>
<sequence length="185" mass="19966">MTATASDDEAVTALALSAAKGNGRALEAFIKATQQDVWRFVAYLSDVGSADDLTQETFLRAIGAIPRFSARSSARTWLLAIARHVVADHIRHVRSRPRTTRGARPEHLIDGDRHARGFEDLVEVTTMIADLTTDQREALLLTQLLGLSYADAAAVCGCPVGTIRSRVARARDALLADAEPDDLTG</sequence>
<dbReference type="EMBL" id="AE000516">
    <property type="protein sequence ID" value="AAK46409.1"/>
    <property type="status" value="ALT_INIT"/>
    <property type="molecule type" value="Genomic_DNA"/>
</dbReference>
<dbReference type="PIR" id="H70764">
    <property type="entry name" value="H70764"/>
</dbReference>
<dbReference type="RefSeq" id="WP_003410678.1">
    <property type="nucleotide sequence ID" value="NZ_KK341227.1"/>
</dbReference>
<dbReference type="SMR" id="P9WGH0"/>
<dbReference type="KEGG" id="mtc:MT2129"/>
<dbReference type="PATRIC" id="fig|83331.31.peg.2297"/>
<dbReference type="HOGENOM" id="CLU_893774_0_0_11"/>
<dbReference type="Proteomes" id="UP000001020">
    <property type="component" value="Chromosome"/>
</dbReference>
<dbReference type="GO" id="GO:0003677">
    <property type="term" value="F:DNA binding"/>
    <property type="evidence" value="ECO:0007669"/>
    <property type="project" value="UniProtKB-KW"/>
</dbReference>
<dbReference type="GO" id="GO:0016987">
    <property type="term" value="F:sigma factor activity"/>
    <property type="evidence" value="ECO:0007669"/>
    <property type="project" value="UniProtKB-KW"/>
</dbReference>
<dbReference type="GO" id="GO:0006352">
    <property type="term" value="P:DNA-templated transcription initiation"/>
    <property type="evidence" value="ECO:0007669"/>
    <property type="project" value="InterPro"/>
</dbReference>
<dbReference type="GO" id="GO:0006950">
    <property type="term" value="P:response to stress"/>
    <property type="evidence" value="ECO:0007669"/>
    <property type="project" value="UniProtKB-ARBA"/>
</dbReference>
<dbReference type="FunFam" id="1.10.10.10:FF:000545">
    <property type="entry name" value="RNA polymerase sigma factor"/>
    <property type="match status" value="1"/>
</dbReference>
<dbReference type="Gene3D" id="1.10.1740.10">
    <property type="match status" value="1"/>
</dbReference>
<dbReference type="Gene3D" id="1.10.10.10">
    <property type="entry name" value="Winged helix-like DNA-binding domain superfamily/Winged helix DNA-binding domain"/>
    <property type="match status" value="1"/>
</dbReference>
<dbReference type="InterPro" id="IPR039425">
    <property type="entry name" value="RNA_pol_sigma-70-like"/>
</dbReference>
<dbReference type="InterPro" id="IPR014284">
    <property type="entry name" value="RNA_pol_sigma-70_dom"/>
</dbReference>
<dbReference type="InterPro" id="IPR000838">
    <property type="entry name" value="RNA_pol_sigma70_ECF_CS"/>
</dbReference>
<dbReference type="InterPro" id="IPR007627">
    <property type="entry name" value="RNA_pol_sigma70_r2"/>
</dbReference>
<dbReference type="InterPro" id="IPR013249">
    <property type="entry name" value="RNA_pol_sigma70_r4_t2"/>
</dbReference>
<dbReference type="InterPro" id="IPR013325">
    <property type="entry name" value="RNA_pol_sigma_r2"/>
</dbReference>
<dbReference type="InterPro" id="IPR013324">
    <property type="entry name" value="RNA_pol_sigma_r3/r4-like"/>
</dbReference>
<dbReference type="InterPro" id="IPR036388">
    <property type="entry name" value="WH-like_DNA-bd_sf"/>
</dbReference>
<dbReference type="NCBIfam" id="NF007231">
    <property type="entry name" value="PRK09649.1"/>
    <property type="match status" value="1"/>
</dbReference>
<dbReference type="NCBIfam" id="TIGR02937">
    <property type="entry name" value="sigma70-ECF"/>
    <property type="match status" value="1"/>
</dbReference>
<dbReference type="PANTHER" id="PTHR43133:SF61">
    <property type="entry name" value="ECF RNA POLYMERASE SIGMA FACTOR SIGC"/>
    <property type="match status" value="1"/>
</dbReference>
<dbReference type="PANTHER" id="PTHR43133">
    <property type="entry name" value="RNA POLYMERASE ECF-TYPE SIGMA FACTO"/>
    <property type="match status" value="1"/>
</dbReference>
<dbReference type="Pfam" id="PF04542">
    <property type="entry name" value="Sigma70_r2"/>
    <property type="match status" value="1"/>
</dbReference>
<dbReference type="Pfam" id="PF08281">
    <property type="entry name" value="Sigma70_r4_2"/>
    <property type="match status" value="1"/>
</dbReference>
<dbReference type="SUPFAM" id="SSF88946">
    <property type="entry name" value="Sigma2 domain of RNA polymerase sigma factors"/>
    <property type="match status" value="1"/>
</dbReference>
<dbReference type="SUPFAM" id="SSF88659">
    <property type="entry name" value="Sigma3 and sigma4 domains of RNA polymerase sigma factors"/>
    <property type="match status" value="1"/>
</dbReference>
<dbReference type="PROSITE" id="PS01063">
    <property type="entry name" value="SIGMA70_ECF"/>
    <property type="match status" value="1"/>
</dbReference>
<protein>
    <recommendedName>
        <fullName>ECF RNA polymerase sigma factor SigC</fullName>
        <shortName>ECF sigma factor SigC</shortName>
    </recommendedName>
    <alternativeName>
        <fullName>Alternative RNA polymerase sigma factor SigC</fullName>
    </alternativeName>
    <alternativeName>
        <fullName>RNA polymerase sigma-C factor</fullName>
        <shortName>Sigma-C factor</shortName>
    </alternativeName>
</protein>